<proteinExistence type="evidence at transcript level"/>
<organism evidence="9">
    <name type="scientific">Arabidopsis thaliana</name>
    <name type="common">Mouse-ear cress</name>
    <dbReference type="NCBI Taxonomy" id="3702"/>
    <lineage>
        <taxon>Eukaryota</taxon>
        <taxon>Viridiplantae</taxon>
        <taxon>Streptophyta</taxon>
        <taxon>Embryophyta</taxon>
        <taxon>Tracheophyta</taxon>
        <taxon>Spermatophyta</taxon>
        <taxon>Magnoliopsida</taxon>
        <taxon>eudicotyledons</taxon>
        <taxon>Gunneridae</taxon>
        <taxon>Pentapetalae</taxon>
        <taxon>rosids</taxon>
        <taxon>malvids</taxon>
        <taxon>Brassicales</taxon>
        <taxon>Brassicaceae</taxon>
        <taxon>Camelineae</taxon>
        <taxon>Arabidopsis</taxon>
    </lineage>
</organism>
<name>HIP14_ARATH</name>
<reference key="1">
    <citation type="submission" date="1999-04" db="EMBL/GenBank/DDBJ databases">
        <title>Structural analysis of Arabidopsis thaliana chromosome 5. XI.</title>
        <authorList>
            <person name="Kaneko T."/>
            <person name="Katoh T."/>
            <person name="Asamizu E."/>
            <person name="Sato S."/>
            <person name="Nakamura Y."/>
            <person name="Kotani H."/>
            <person name="Tabata S."/>
        </authorList>
    </citation>
    <scope>NUCLEOTIDE SEQUENCE [LARGE SCALE GENOMIC DNA]</scope>
    <source>
        <strain>cv. Columbia</strain>
    </source>
</reference>
<reference key="2">
    <citation type="journal article" date="2017" name="Plant J.">
        <title>Araport11: a complete reannotation of the Arabidopsis thaliana reference genome.</title>
        <authorList>
            <person name="Cheng C.Y."/>
            <person name="Krishnakumar V."/>
            <person name="Chan A.P."/>
            <person name="Thibaud-Nissen F."/>
            <person name="Schobel S."/>
            <person name="Town C.D."/>
        </authorList>
    </citation>
    <scope>GENOME REANNOTATION</scope>
    <source>
        <strain>cv. Columbia</strain>
    </source>
</reference>
<reference key="3">
    <citation type="journal article" date="2003" name="Science">
        <title>Empirical analysis of transcriptional activity in the Arabidopsis genome.</title>
        <authorList>
            <person name="Yamada K."/>
            <person name="Lim J."/>
            <person name="Dale J.M."/>
            <person name="Chen H."/>
            <person name="Shinn P."/>
            <person name="Palm C.J."/>
            <person name="Southwick A.M."/>
            <person name="Wu H.C."/>
            <person name="Kim C.J."/>
            <person name="Nguyen M."/>
            <person name="Pham P.K."/>
            <person name="Cheuk R.F."/>
            <person name="Karlin-Newmann G."/>
            <person name="Liu S.X."/>
            <person name="Lam B."/>
            <person name="Sakano H."/>
            <person name="Wu T."/>
            <person name="Yu G."/>
            <person name="Miranda M."/>
            <person name="Quach H.L."/>
            <person name="Tripp M."/>
            <person name="Chang C.H."/>
            <person name="Lee J.M."/>
            <person name="Toriumi M.J."/>
            <person name="Chan M.M."/>
            <person name="Tang C.C."/>
            <person name="Onodera C.S."/>
            <person name="Deng J.M."/>
            <person name="Akiyama K."/>
            <person name="Ansari Y."/>
            <person name="Arakawa T."/>
            <person name="Banh J."/>
            <person name="Banno F."/>
            <person name="Bowser L."/>
            <person name="Brooks S.Y."/>
            <person name="Carninci P."/>
            <person name="Chao Q."/>
            <person name="Choy N."/>
            <person name="Enju A."/>
            <person name="Goldsmith A.D."/>
            <person name="Gurjal M."/>
            <person name="Hansen N.F."/>
            <person name="Hayashizaki Y."/>
            <person name="Johnson-Hopson C."/>
            <person name="Hsuan V.W."/>
            <person name="Iida K."/>
            <person name="Karnes M."/>
            <person name="Khan S."/>
            <person name="Koesema E."/>
            <person name="Ishida J."/>
            <person name="Jiang P.X."/>
            <person name="Jones T."/>
            <person name="Kawai J."/>
            <person name="Kamiya A."/>
            <person name="Meyers C."/>
            <person name="Nakajima M."/>
            <person name="Narusaka M."/>
            <person name="Seki M."/>
            <person name="Sakurai T."/>
            <person name="Satou M."/>
            <person name="Tamse R."/>
            <person name="Vaysberg M."/>
            <person name="Wallender E.K."/>
            <person name="Wong C."/>
            <person name="Yamamura Y."/>
            <person name="Yuan S."/>
            <person name="Shinozaki K."/>
            <person name="Davis R.W."/>
            <person name="Theologis A."/>
            <person name="Ecker J.R."/>
        </authorList>
    </citation>
    <scope>NUCLEOTIDE SEQUENCE [LARGE SCALE MRNA]</scope>
    <source>
        <strain>cv. Columbia</strain>
    </source>
</reference>
<reference key="4">
    <citation type="submission" date="2006-07" db="EMBL/GenBank/DDBJ databases">
        <title>Large-scale analysis of RIKEN Arabidopsis full-length (RAFL) cDNAs.</title>
        <authorList>
            <person name="Totoki Y."/>
            <person name="Seki M."/>
            <person name="Ishida J."/>
            <person name="Nakajima M."/>
            <person name="Enju A."/>
            <person name="Kamiya A."/>
            <person name="Narusaka M."/>
            <person name="Shin-i T."/>
            <person name="Nakagawa M."/>
            <person name="Sakamoto N."/>
            <person name="Oishi K."/>
            <person name="Kohara Y."/>
            <person name="Kobayashi M."/>
            <person name="Toyoda A."/>
            <person name="Sakaki Y."/>
            <person name="Sakurai T."/>
            <person name="Iida K."/>
            <person name="Akiyama K."/>
            <person name="Satou M."/>
            <person name="Toyoda T."/>
            <person name="Konagaya A."/>
            <person name="Carninci P."/>
            <person name="Kawai J."/>
            <person name="Hayashizaki Y."/>
            <person name="Shinozaki K."/>
        </authorList>
    </citation>
    <scope>NUCLEOTIDE SEQUENCE [LARGE SCALE MRNA]</scope>
    <source>
        <strain>cv. Columbia</strain>
    </source>
</reference>
<reference key="5">
    <citation type="journal article" date="2010" name="Metallomics">
        <title>Metallochaperone-like genes in Arabidopsis thaliana.</title>
        <authorList>
            <person name="Tehseen M."/>
            <person name="Cairns N."/>
            <person name="Sherson S."/>
            <person name="Cobbett C.S."/>
        </authorList>
    </citation>
    <scope>GENE FAMILY</scope>
    <scope>NOMENCLATURE</scope>
</reference>
<reference key="6">
    <citation type="journal article" date="2013" name="FEBS J.">
        <title>Heavy metal-associated isoprenylated plant protein (HIPP): characterization of a family of proteins exclusive to plants.</title>
        <authorList>
            <person name="de Abreu-Neto J.B."/>
            <person name="Turchetto-Zolet A.C."/>
            <person name="de Oliveira L.F."/>
            <person name="Zanettini M.H."/>
            <person name="Margis-Pinheiro M."/>
        </authorList>
    </citation>
    <scope>GENE FAMILY</scope>
    <scope>NOMENCLATURE</scope>
    <scope>INDUCTION BY CADMIUM</scope>
</reference>
<accession>Q9LTE1</accession>
<sequence>MTAKNAVLQLSIHEERTRKKALVTVSRFSGVTSITMDKSGKMTIVGEVDVPAVVMKLRKLCNTEIVSVDDVKPPVKKPEPEKPAESIAYPVPMNYAYQFNPAYANSYYHQPYGNCRVVDEPNCVIM</sequence>
<gene>
    <name evidence="4 5" type="primary">HIPP14</name>
    <name evidence="8" type="ordered locus">At5g52760</name>
    <name evidence="9" type="ORF">F6N7.25</name>
</gene>
<keyword id="KW-0449">Lipoprotein</keyword>
<keyword id="KW-0479">Metal-binding</keyword>
<keyword id="KW-0488">Methylation</keyword>
<keyword id="KW-0636">Prenylation</keyword>
<keyword id="KW-1185">Reference proteome</keyword>
<protein>
    <recommendedName>
        <fullName evidence="4 5">Heavy metal-associated isoprenylated plant protein 14</fullName>
        <shortName evidence="4 5">AtHIP14</shortName>
    </recommendedName>
</protein>
<evidence type="ECO:0000250" key="1">
    <source>
        <dbReference type="UniProtKB" id="Q9LZF1"/>
    </source>
</evidence>
<evidence type="ECO:0000250" key="2">
    <source>
        <dbReference type="UniProtKB" id="Q9SZN7"/>
    </source>
</evidence>
<evidence type="ECO:0000255" key="3">
    <source>
        <dbReference type="PROSITE-ProRule" id="PRU00280"/>
    </source>
</evidence>
<evidence type="ECO:0000303" key="4">
    <source>
    </source>
</evidence>
<evidence type="ECO:0000303" key="5">
    <source>
    </source>
</evidence>
<evidence type="ECO:0000305" key="6"/>
<evidence type="ECO:0000305" key="7">
    <source>
    </source>
</evidence>
<evidence type="ECO:0000312" key="8">
    <source>
        <dbReference type="Araport" id="AT5G52760"/>
    </source>
</evidence>
<evidence type="ECO:0000312" key="9">
    <source>
        <dbReference type="EMBL" id="BAA98094.1"/>
    </source>
</evidence>
<feature type="chain" id="PRO_0000437817" description="Heavy metal-associated isoprenylated plant protein 14">
    <location>
        <begin position="1"/>
        <end position="123"/>
    </location>
</feature>
<feature type="propeptide" id="PRO_0000437818" description="Removed in mature form" evidence="6">
    <location>
        <begin position="124"/>
        <end position="126"/>
    </location>
</feature>
<feature type="domain" description="HMA" evidence="3">
    <location>
        <begin position="3"/>
        <end position="69"/>
    </location>
</feature>
<feature type="modified residue" description="Cysteine methyl ester" evidence="2">
    <location>
        <position position="123"/>
    </location>
</feature>
<feature type="lipid moiety-binding region" description="S-farnesyl cysteine" evidence="2">
    <location>
        <position position="123"/>
    </location>
</feature>
<dbReference type="EMBL" id="AB025606">
    <property type="protein sequence ID" value="BAA98094.1"/>
    <property type="molecule type" value="Genomic_DNA"/>
</dbReference>
<dbReference type="EMBL" id="CP002688">
    <property type="protein sequence ID" value="AED96257.1"/>
    <property type="molecule type" value="Genomic_DNA"/>
</dbReference>
<dbReference type="EMBL" id="BT006168">
    <property type="protein sequence ID" value="AAP04152.1"/>
    <property type="molecule type" value="mRNA"/>
</dbReference>
<dbReference type="EMBL" id="BT008537">
    <property type="protein sequence ID" value="AAP40364.1"/>
    <property type="molecule type" value="mRNA"/>
</dbReference>
<dbReference type="EMBL" id="AK229625">
    <property type="protein sequence ID" value="BAF01470.1"/>
    <property type="molecule type" value="mRNA"/>
</dbReference>
<dbReference type="RefSeq" id="NP_200088.1">
    <property type="nucleotide sequence ID" value="NM_124654.5"/>
</dbReference>
<dbReference type="SMR" id="Q9LTE1"/>
<dbReference type="STRING" id="3702.Q9LTE1"/>
<dbReference type="PaxDb" id="3702-AT5G52760.1"/>
<dbReference type="ProteomicsDB" id="230280"/>
<dbReference type="EnsemblPlants" id="AT5G52760.1">
    <property type="protein sequence ID" value="AT5G52760.1"/>
    <property type="gene ID" value="AT5G52760"/>
</dbReference>
<dbReference type="GeneID" id="835353"/>
<dbReference type="Gramene" id="AT5G52760.1">
    <property type="protein sequence ID" value="AT5G52760.1"/>
    <property type="gene ID" value="AT5G52760"/>
</dbReference>
<dbReference type="KEGG" id="ath:AT5G52760"/>
<dbReference type="Araport" id="AT5G52760"/>
<dbReference type="TAIR" id="AT5G52760"/>
<dbReference type="HOGENOM" id="CLU_092610_3_3_1"/>
<dbReference type="InParanoid" id="Q9LTE1"/>
<dbReference type="OMA" id="HAYANSY"/>
<dbReference type="OrthoDB" id="1111409at2759"/>
<dbReference type="PhylomeDB" id="Q9LTE1"/>
<dbReference type="PRO" id="PR:Q9LTE1"/>
<dbReference type="Proteomes" id="UP000006548">
    <property type="component" value="Chromosome 5"/>
</dbReference>
<dbReference type="ExpressionAtlas" id="Q9LTE1">
    <property type="expression patterns" value="baseline and differential"/>
</dbReference>
<dbReference type="GO" id="GO:0046872">
    <property type="term" value="F:metal ion binding"/>
    <property type="evidence" value="ECO:0007669"/>
    <property type="project" value="UniProtKB-KW"/>
</dbReference>
<dbReference type="Gene3D" id="3.30.70.100">
    <property type="match status" value="1"/>
</dbReference>
<dbReference type="InterPro" id="IPR051863">
    <property type="entry name" value="HIPP"/>
</dbReference>
<dbReference type="InterPro" id="IPR006121">
    <property type="entry name" value="HMA_dom"/>
</dbReference>
<dbReference type="PANTHER" id="PTHR45811">
    <property type="entry name" value="COPPER TRANSPORT PROTEIN FAMILY-RELATED"/>
    <property type="match status" value="1"/>
</dbReference>
<dbReference type="PANTHER" id="PTHR45811:SF80">
    <property type="entry name" value="COPPER TRANSPORT PROTEIN FAMILY-RELATED"/>
    <property type="match status" value="1"/>
</dbReference>
<dbReference type="PROSITE" id="PS50846">
    <property type="entry name" value="HMA_2"/>
    <property type="match status" value="1"/>
</dbReference>
<comment type="function">
    <text evidence="1">Probable heavy-metal-binding protein.</text>
</comment>
<comment type="induction">
    <text evidence="5">Up-regulated by cadmium.</text>
</comment>
<comment type="similarity">
    <text evidence="6">Belongs to the HIPP family.</text>
</comment>
<comment type="caution">
    <text evidence="7">Contains an apparent HMA-like domain but lacks the core conserved Cys-X-X-Cys motif.</text>
</comment>